<comment type="function">
    <text evidence="1">One of the primary rRNA binding proteins, it binds directly to 16S rRNA where it helps nucleate assembly of the platform of the 30S subunit by binding and bridging several RNA helices of the 16S rRNA.</text>
</comment>
<comment type="function">
    <text evidence="1">Forms an intersubunit bridge (bridge B4) with the 23S rRNA of the 50S subunit in the ribosome.</text>
</comment>
<comment type="subunit">
    <text evidence="1">Part of the 30S ribosomal subunit. Forms a bridge to the 50S subunit in the 70S ribosome, contacting the 23S rRNA.</text>
</comment>
<comment type="similarity">
    <text evidence="1">Belongs to the universal ribosomal protein uS15 family.</text>
</comment>
<accession>C1L2N6</accession>
<protein>
    <recommendedName>
        <fullName evidence="1">Small ribosomal subunit protein uS15</fullName>
    </recommendedName>
    <alternativeName>
        <fullName evidence="2">30S ribosomal protein S15</fullName>
    </alternativeName>
</protein>
<proteinExistence type="inferred from homology"/>
<name>RS15_LISMC</name>
<reference key="1">
    <citation type="journal article" date="2012" name="BMC Genomics">
        <title>Comparative genomics and transcriptomics of lineages I, II, and III strains of Listeria monocytogenes.</title>
        <authorList>
            <person name="Hain T."/>
            <person name="Ghai R."/>
            <person name="Billion A."/>
            <person name="Kuenne C.T."/>
            <person name="Steinweg C."/>
            <person name="Izar B."/>
            <person name="Mohamed W."/>
            <person name="Mraheil M."/>
            <person name="Domann E."/>
            <person name="Schaffrath S."/>
            <person name="Karst U."/>
            <person name="Goesmann A."/>
            <person name="Oehm S."/>
            <person name="Puhler A."/>
            <person name="Merkl R."/>
            <person name="Vorwerk S."/>
            <person name="Glaser P."/>
            <person name="Garrido P."/>
            <person name="Rusniok C."/>
            <person name="Buchrieser C."/>
            <person name="Goebel W."/>
            <person name="Chakraborty T."/>
        </authorList>
    </citation>
    <scope>NUCLEOTIDE SEQUENCE [LARGE SCALE GENOMIC DNA]</scope>
    <source>
        <strain>CLIP80459</strain>
    </source>
</reference>
<dbReference type="EMBL" id="FM242711">
    <property type="protein sequence ID" value="CAS05102.1"/>
    <property type="molecule type" value="Genomic_DNA"/>
</dbReference>
<dbReference type="RefSeq" id="WP_003719603.1">
    <property type="nucleotide sequence ID" value="NC_012488.1"/>
</dbReference>
<dbReference type="SMR" id="C1L2N6"/>
<dbReference type="GeneID" id="93239206"/>
<dbReference type="KEGG" id="lmc:Lm4b_01338"/>
<dbReference type="HOGENOM" id="CLU_148518_0_0_9"/>
<dbReference type="GO" id="GO:0022627">
    <property type="term" value="C:cytosolic small ribosomal subunit"/>
    <property type="evidence" value="ECO:0007669"/>
    <property type="project" value="TreeGrafter"/>
</dbReference>
<dbReference type="GO" id="GO:0019843">
    <property type="term" value="F:rRNA binding"/>
    <property type="evidence" value="ECO:0007669"/>
    <property type="project" value="UniProtKB-UniRule"/>
</dbReference>
<dbReference type="GO" id="GO:0003735">
    <property type="term" value="F:structural constituent of ribosome"/>
    <property type="evidence" value="ECO:0007669"/>
    <property type="project" value="InterPro"/>
</dbReference>
<dbReference type="GO" id="GO:0006412">
    <property type="term" value="P:translation"/>
    <property type="evidence" value="ECO:0007669"/>
    <property type="project" value="UniProtKB-UniRule"/>
</dbReference>
<dbReference type="CDD" id="cd00353">
    <property type="entry name" value="Ribosomal_S15p_S13e"/>
    <property type="match status" value="1"/>
</dbReference>
<dbReference type="FunFam" id="1.10.287.10:FF:000002">
    <property type="entry name" value="30S ribosomal protein S15"/>
    <property type="match status" value="1"/>
</dbReference>
<dbReference type="Gene3D" id="6.10.250.3130">
    <property type="match status" value="1"/>
</dbReference>
<dbReference type="Gene3D" id="1.10.287.10">
    <property type="entry name" value="S15/NS1, RNA-binding"/>
    <property type="match status" value="1"/>
</dbReference>
<dbReference type="HAMAP" id="MF_01343_B">
    <property type="entry name" value="Ribosomal_uS15_B"/>
    <property type="match status" value="1"/>
</dbReference>
<dbReference type="InterPro" id="IPR000589">
    <property type="entry name" value="Ribosomal_uS15"/>
</dbReference>
<dbReference type="InterPro" id="IPR005290">
    <property type="entry name" value="Ribosomal_uS15_bac-type"/>
</dbReference>
<dbReference type="InterPro" id="IPR009068">
    <property type="entry name" value="uS15_NS1_RNA-bd_sf"/>
</dbReference>
<dbReference type="NCBIfam" id="TIGR00952">
    <property type="entry name" value="S15_bact"/>
    <property type="match status" value="1"/>
</dbReference>
<dbReference type="PANTHER" id="PTHR23321">
    <property type="entry name" value="RIBOSOMAL PROTEIN S15, BACTERIAL AND ORGANELLAR"/>
    <property type="match status" value="1"/>
</dbReference>
<dbReference type="PANTHER" id="PTHR23321:SF26">
    <property type="entry name" value="SMALL RIBOSOMAL SUBUNIT PROTEIN US15M"/>
    <property type="match status" value="1"/>
</dbReference>
<dbReference type="Pfam" id="PF00312">
    <property type="entry name" value="Ribosomal_S15"/>
    <property type="match status" value="1"/>
</dbReference>
<dbReference type="SMART" id="SM01387">
    <property type="entry name" value="Ribosomal_S15"/>
    <property type="match status" value="1"/>
</dbReference>
<dbReference type="SUPFAM" id="SSF47060">
    <property type="entry name" value="S15/NS1 RNA-binding domain"/>
    <property type="match status" value="1"/>
</dbReference>
<dbReference type="PROSITE" id="PS00362">
    <property type="entry name" value="RIBOSOMAL_S15"/>
    <property type="match status" value="1"/>
</dbReference>
<evidence type="ECO:0000255" key="1">
    <source>
        <dbReference type="HAMAP-Rule" id="MF_01343"/>
    </source>
</evidence>
<evidence type="ECO:0000305" key="2"/>
<sequence length="89" mass="10631">MALTQERKNEIIAEYRVHDTDTGSPEVQIAVLTAEINSLNEHVRVHKKDHHSYRGLMKMVGHRRNLLTYLRKKDVQRYRELIKRLGLRR</sequence>
<gene>
    <name evidence="1" type="primary">rpsO</name>
    <name type="ordered locus">Lm4b_01338</name>
</gene>
<keyword id="KW-0687">Ribonucleoprotein</keyword>
<keyword id="KW-0689">Ribosomal protein</keyword>
<keyword id="KW-0694">RNA-binding</keyword>
<keyword id="KW-0699">rRNA-binding</keyword>
<feature type="chain" id="PRO_1000214763" description="Small ribosomal subunit protein uS15">
    <location>
        <begin position="1"/>
        <end position="89"/>
    </location>
</feature>
<organism>
    <name type="scientific">Listeria monocytogenes serotype 4b (strain CLIP80459)</name>
    <dbReference type="NCBI Taxonomy" id="568819"/>
    <lineage>
        <taxon>Bacteria</taxon>
        <taxon>Bacillati</taxon>
        <taxon>Bacillota</taxon>
        <taxon>Bacilli</taxon>
        <taxon>Bacillales</taxon>
        <taxon>Listeriaceae</taxon>
        <taxon>Listeria</taxon>
    </lineage>
</organism>